<reference key="1">
    <citation type="journal article" date="2008" name="BMC Genomics">
        <title>Complete genome of Phenylobacterium zucineum - a novel facultative intracellular bacterium isolated from human erythroleukemia cell line K562.</title>
        <authorList>
            <person name="Luo Y."/>
            <person name="Xu X."/>
            <person name="Ding Z."/>
            <person name="Liu Z."/>
            <person name="Zhang B."/>
            <person name="Yan Z."/>
            <person name="Sun J."/>
            <person name="Hu S."/>
            <person name="Hu X."/>
        </authorList>
    </citation>
    <scope>NUCLEOTIDE SEQUENCE [LARGE SCALE GENOMIC DNA]</scope>
    <source>
        <strain>HLK1</strain>
    </source>
</reference>
<sequence>MANVTVIGAQWGDEGKGKLVDWLSNRADVVVRFQGGHNAGHTLVVGNQTYKLSLLPSGVVQGKLSIIGNGVVVDPWHLLKEIETLGAQGVSIGPDLLVLADNACLILPLHRDLDQAREAAATNKIGTTGRGIGPAYEDKVGRRAIRVADLHDREALEAKIDRLLAHHTPLRRGLGLPEYDGPALLAELEALAPKILPYARPAWLMLDEIVKAGSRVLFEGAQGALLDVDHGTYPYVTSSNTVAGQAAAGSGLGPKGPGYVLGIVKAYTTRVGEGPFPTELNDEVGQHLGTVGREFGTVTGRSRRCGWFDAALVRQSVALNGIAGIALTKLDVLDGLPTLKICTGYRLGDREIGYLPAGLKAQRELAPVYEEMEGWSETTQGARSWKDLPANAVKYVRRIEELIGAPVALLSTSPQRDDTILMRDPFQD</sequence>
<keyword id="KW-0963">Cytoplasm</keyword>
<keyword id="KW-0342">GTP-binding</keyword>
<keyword id="KW-0436">Ligase</keyword>
<keyword id="KW-0460">Magnesium</keyword>
<keyword id="KW-0479">Metal-binding</keyword>
<keyword id="KW-0547">Nucleotide-binding</keyword>
<keyword id="KW-0658">Purine biosynthesis</keyword>
<keyword id="KW-1185">Reference proteome</keyword>
<accession>B4RDX2</accession>
<protein>
    <recommendedName>
        <fullName evidence="1">Adenylosuccinate synthetase</fullName>
        <shortName evidence="1">AMPSase</shortName>
        <shortName evidence="1">AdSS</shortName>
        <ecNumber evidence="1">6.3.4.4</ecNumber>
    </recommendedName>
    <alternativeName>
        <fullName evidence="1">IMP--aspartate ligase</fullName>
    </alternativeName>
</protein>
<name>PURA_PHEZH</name>
<dbReference type="EC" id="6.3.4.4" evidence="1"/>
<dbReference type="EMBL" id="CP000747">
    <property type="protein sequence ID" value="ACG76821.1"/>
    <property type="molecule type" value="Genomic_DNA"/>
</dbReference>
<dbReference type="RefSeq" id="WP_012520969.1">
    <property type="nucleotide sequence ID" value="NC_011144.1"/>
</dbReference>
<dbReference type="SMR" id="B4RDX2"/>
<dbReference type="STRING" id="450851.PHZ_c0407"/>
<dbReference type="KEGG" id="pzu:PHZ_c0407"/>
<dbReference type="eggNOG" id="COG0104">
    <property type="taxonomic scope" value="Bacteria"/>
</dbReference>
<dbReference type="HOGENOM" id="CLU_029848_0_0_5"/>
<dbReference type="OrthoDB" id="9807553at2"/>
<dbReference type="UniPathway" id="UPA00075">
    <property type="reaction ID" value="UER00335"/>
</dbReference>
<dbReference type="Proteomes" id="UP000001868">
    <property type="component" value="Chromosome"/>
</dbReference>
<dbReference type="GO" id="GO:0005737">
    <property type="term" value="C:cytoplasm"/>
    <property type="evidence" value="ECO:0007669"/>
    <property type="project" value="UniProtKB-SubCell"/>
</dbReference>
<dbReference type="GO" id="GO:0004019">
    <property type="term" value="F:adenylosuccinate synthase activity"/>
    <property type="evidence" value="ECO:0007669"/>
    <property type="project" value="UniProtKB-UniRule"/>
</dbReference>
<dbReference type="GO" id="GO:0005525">
    <property type="term" value="F:GTP binding"/>
    <property type="evidence" value="ECO:0007669"/>
    <property type="project" value="UniProtKB-UniRule"/>
</dbReference>
<dbReference type="GO" id="GO:0000287">
    <property type="term" value="F:magnesium ion binding"/>
    <property type="evidence" value="ECO:0007669"/>
    <property type="project" value="UniProtKB-UniRule"/>
</dbReference>
<dbReference type="GO" id="GO:0044208">
    <property type="term" value="P:'de novo' AMP biosynthetic process"/>
    <property type="evidence" value="ECO:0007669"/>
    <property type="project" value="UniProtKB-UniRule"/>
</dbReference>
<dbReference type="GO" id="GO:0046040">
    <property type="term" value="P:IMP metabolic process"/>
    <property type="evidence" value="ECO:0007669"/>
    <property type="project" value="TreeGrafter"/>
</dbReference>
<dbReference type="CDD" id="cd03108">
    <property type="entry name" value="AdSS"/>
    <property type="match status" value="1"/>
</dbReference>
<dbReference type="FunFam" id="1.10.300.10:FF:000001">
    <property type="entry name" value="Adenylosuccinate synthetase"/>
    <property type="match status" value="1"/>
</dbReference>
<dbReference type="FunFam" id="3.90.170.10:FF:000001">
    <property type="entry name" value="Adenylosuccinate synthetase"/>
    <property type="match status" value="1"/>
</dbReference>
<dbReference type="Gene3D" id="3.40.440.10">
    <property type="entry name" value="Adenylosuccinate Synthetase, subunit A, domain 1"/>
    <property type="match status" value="1"/>
</dbReference>
<dbReference type="Gene3D" id="1.10.300.10">
    <property type="entry name" value="Adenylosuccinate Synthetase, subunit A, domain 2"/>
    <property type="match status" value="1"/>
</dbReference>
<dbReference type="Gene3D" id="3.90.170.10">
    <property type="entry name" value="Adenylosuccinate Synthetase, subunit A, domain 3"/>
    <property type="match status" value="1"/>
</dbReference>
<dbReference type="HAMAP" id="MF_00011">
    <property type="entry name" value="Adenylosucc_synth"/>
    <property type="match status" value="1"/>
</dbReference>
<dbReference type="InterPro" id="IPR018220">
    <property type="entry name" value="Adenylosuccin_syn_GTP-bd"/>
</dbReference>
<dbReference type="InterPro" id="IPR033128">
    <property type="entry name" value="Adenylosuccin_syn_Lys_AS"/>
</dbReference>
<dbReference type="InterPro" id="IPR042109">
    <property type="entry name" value="Adenylosuccinate_synth_dom1"/>
</dbReference>
<dbReference type="InterPro" id="IPR042110">
    <property type="entry name" value="Adenylosuccinate_synth_dom2"/>
</dbReference>
<dbReference type="InterPro" id="IPR042111">
    <property type="entry name" value="Adenylosuccinate_synth_dom3"/>
</dbReference>
<dbReference type="InterPro" id="IPR001114">
    <property type="entry name" value="Adenylosuccinate_synthetase"/>
</dbReference>
<dbReference type="InterPro" id="IPR027417">
    <property type="entry name" value="P-loop_NTPase"/>
</dbReference>
<dbReference type="NCBIfam" id="NF002223">
    <property type="entry name" value="PRK01117.1"/>
    <property type="match status" value="1"/>
</dbReference>
<dbReference type="NCBIfam" id="TIGR00184">
    <property type="entry name" value="purA"/>
    <property type="match status" value="1"/>
</dbReference>
<dbReference type="PANTHER" id="PTHR11846">
    <property type="entry name" value="ADENYLOSUCCINATE SYNTHETASE"/>
    <property type="match status" value="1"/>
</dbReference>
<dbReference type="PANTHER" id="PTHR11846:SF0">
    <property type="entry name" value="ADENYLOSUCCINATE SYNTHETASE"/>
    <property type="match status" value="1"/>
</dbReference>
<dbReference type="Pfam" id="PF00709">
    <property type="entry name" value="Adenylsucc_synt"/>
    <property type="match status" value="1"/>
</dbReference>
<dbReference type="SMART" id="SM00788">
    <property type="entry name" value="Adenylsucc_synt"/>
    <property type="match status" value="1"/>
</dbReference>
<dbReference type="SUPFAM" id="SSF52540">
    <property type="entry name" value="P-loop containing nucleoside triphosphate hydrolases"/>
    <property type="match status" value="1"/>
</dbReference>
<dbReference type="PROSITE" id="PS01266">
    <property type="entry name" value="ADENYLOSUCCIN_SYN_1"/>
    <property type="match status" value="1"/>
</dbReference>
<dbReference type="PROSITE" id="PS00513">
    <property type="entry name" value="ADENYLOSUCCIN_SYN_2"/>
    <property type="match status" value="1"/>
</dbReference>
<proteinExistence type="inferred from homology"/>
<feature type="chain" id="PRO_1000089322" description="Adenylosuccinate synthetase">
    <location>
        <begin position="1"/>
        <end position="428"/>
    </location>
</feature>
<feature type="active site" description="Proton acceptor" evidence="1">
    <location>
        <position position="13"/>
    </location>
</feature>
<feature type="active site" description="Proton donor" evidence="1">
    <location>
        <position position="41"/>
    </location>
</feature>
<feature type="binding site" evidence="1">
    <location>
        <begin position="12"/>
        <end position="18"/>
    </location>
    <ligand>
        <name>GTP</name>
        <dbReference type="ChEBI" id="CHEBI:37565"/>
    </ligand>
</feature>
<feature type="binding site" description="in other chain" evidence="1">
    <location>
        <begin position="13"/>
        <end position="16"/>
    </location>
    <ligand>
        <name>IMP</name>
        <dbReference type="ChEBI" id="CHEBI:58053"/>
        <note>ligand shared between dimeric partners</note>
    </ligand>
</feature>
<feature type="binding site" evidence="1">
    <location>
        <position position="13"/>
    </location>
    <ligand>
        <name>Mg(2+)</name>
        <dbReference type="ChEBI" id="CHEBI:18420"/>
    </ligand>
</feature>
<feature type="binding site" description="in other chain" evidence="1">
    <location>
        <begin position="38"/>
        <end position="41"/>
    </location>
    <ligand>
        <name>IMP</name>
        <dbReference type="ChEBI" id="CHEBI:58053"/>
        <note>ligand shared between dimeric partners</note>
    </ligand>
</feature>
<feature type="binding site" evidence="1">
    <location>
        <begin position="40"/>
        <end position="42"/>
    </location>
    <ligand>
        <name>GTP</name>
        <dbReference type="ChEBI" id="CHEBI:37565"/>
    </ligand>
</feature>
<feature type="binding site" evidence="1">
    <location>
        <position position="40"/>
    </location>
    <ligand>
        <name>Mg(2+)</name>
        <dbReference type="ChEBI" id="CHEBI:18420"/>
    </ligand>
</feature>
<feature type="binding site" description="in other chain" evidence="1">
    <location>
        <position position="128"/>
    </location>
    <ligand>
        <name>IMP</name>
        <dbReference type="ChEBI" id="CHEBI:58053"/>
        <note>ligand shared between dimeric partners</note>
    </ligand>
</feature>
<feature type="binding site" evidence="1">
    <location>
        <position position="142"/>
    </location>
    <ligand>
        <name>IMP</name>
        <dbReference type="ChEBI" id="CHEBI:58053"/>
        <note>ligand shared between dimeric partners</note>
    </ligand>
</feature>
<feature type="binding site" description="in other chain" evidence="1">
    <location>
        <position position="222"/>
    </location>
    <ligand>
        <name>IMP</name>
        <dbReference type="ChEBI" id="CHEBI:58053"/>
        <note>ligand shared between dimeric partners</note>
    </ligand>
</feature>
<feature type="binding site" description="in other chain" evidence="1">
    <location>
        <position position="237"/>
    </location>
    <ligand>
        <name>IMP</name>
        <dbReference type="ChEBI" id="CHEBI:58053"/>
        <note>ligand shared between dimeric partners</note>
    </ligand>
</feature>
<feature type="binding site" evidence="1">
    <location>
        <begin position="297"/>
        <end position="303"/>
    </location>
    <ligand>
        <name>substrate</name>
    </ligand>
</feature>
<feature type="binding site" description="in other chain" evidence="1">
    <location>
        <position position="301"/>
    </location>
    <ligand>
        <name>IMP</name>
        <dbReference type="ChEBI" id="CHEBI:58053"/>
        <note>ligand shared between dimeric partners</note>
    </ligand>
</feature>
<feature type="binding site" evidence="1">
    <location>
        <position position="303"/>
    </location>
    <ligand>
        <name>GTP</name>
        <dbReference type="ChEBI" id="CHEBI:37565"/>
    </ligand>
</feature>
<feature type="binding site" evidence="1">
    <location>
        <begin position="329"/>
        <end position="331"/>
    </location>
    <ligand>
        <name>GTP</name>
        <dbReference type="ChEBI" id="CHEBI:37565"/>
    </ligand>
</feature>
<feature type="binding site" evidence="1">
    <location>
        <begin position="411"/>
        <end position="413"/>
    </location>
    <ligand>
        <name>GTP</name>
        <dbReference type="ChEBI" id="CHEBI:37565"/>
    </ligand>
</feature>
<organism>
    <name type="scientific">Phenylobacterium zucineum (strain HLK1)</name>
    <dbReference type="NCBI Taxonomy" id="450851"/>
    <lineage>
        <taxon>Bacteria</taxon>
        <taxon>Pseudomonadati</taxon>
        <taxon>Pseudomonadota</taxon>
        <taxon>Alphaproteobacteria</taxon>
        <taxon>Caulobacterales</taxon>
        <taxon>Caulobacteraceae</taxon>
        <taxon>Phenylobacterium</taxon>
    </lineage>
</organism>
<gene>
    <name evidence="1" type="primary">purA</name>
    <name type="ordered locus">PHZ_c0407</name>
</gene>
<comment type="function">
    <text evidence="1">Plays an important role in the de novo pathway of purine nucleotide biosynthesis. Catalyzes the first committed step in the biosynthesis of AMP from IMP.</text>
</comment>
<comment type="catalytic activity">
    <reaction evidence="1">
        <text>IMP + L-aspartate + GTP = N(6)-(1,2-dicarboxyethyl)-AMP + GDP + phosphate + 2 H(+)</text>
        <dbReference type="Rhea" id="RHEA:15753"/>
        <dbReference type="ChEBI" id="CHEBI:15378"/>
        <dbReference type="ChEBI" id="CHEBI:29991"/>
        <dbReference type="ChEBI" id="CHEBI:37565"/>
        <dbReference type="ChEBI" id="CHEBI:43474"/>
        <dbReference type="ChEBI" id="CHEBI:57567"/>
        <dbReference type="ChEBI" id="CHEBI:58053"/>
        <dbReference type="ChEBI" id="CHEBI:58189"/>
        <dbReference type="EC" id="6.3.4.4"/>
    </reaction>
</comment>
<comment type="cofactor">
    <cofactor evidence="1">
        <name>Mg(2+)</name>
        <dbReference type="ChEBI" id="CHEBI:18420"/>
    </cofactor>
    <text evidence="1">Binds 1 Mg(2+) ion per subunit.</text>
</comment>
<comment type="pathway">
    <text evidence="1">Purine metabolism; AMP biosynthesis via de novo pathway; AMP from IMP: step 1/2.</text>
</comment>
<comment type="subunit">
    <text evidence="1">Homodimer.</text>
</comment>
<comment type="subcellular location">
    <subcellularLocation>
        <location evidence="1">Cytoplasm</location>
    </subcellularLocation>
</comment>
<comment type="similarity">
    <text evidence="1">Belongs to the adenylosuccinate synthetase family.</text>
</comment>
<evidence type="ECO:0000255" key="1">
    <source>
        <dbReference type="HAMAP-Rule" id="MF_00011"/>
    </source>
</evidence>